<sequence>MAPVKKLVAKGGKKKKQVLKFTLDCTHPVEDGIMDAANFEQFLQERIKVNGKAGNLGGGVVTIERSKSKITVTSEVPFSKRYLKYLTKKYLKKNNLRDWLRVVANSKESYELRYFQINQDEEEEEDED</sequence>
<protein>
    <recommendedName>
        <fullName evidence="3">Large ribosomal subunit protein eL22</fullName>
    </recommendedName>
    <alternativeName>
        <fullName>60S ribosomal protein L22</fullName>
    </alternativeName>
    <alternativeName>
        <fullName>Heparin-binding protein HBp15</fullName>
    </alternativeName>
</protein>
<organism>
    <name type="scientific">Sus scrofa</name>
    <name type="common">Pig</name>
    <dbReference type="NCBI Taxonomy" id="9823"/>
    <lineage>
        <taxon>Eukaryota</taxon>
        <taxon>Metazoa</taxon>
        <taxon>Chordata</taxon>
        <taxon>Craniata</taxon>
        <taxon>Vertebrata</taxon>
        <taxon>Euteleostomi</taxon>
        <taxon>Mammalia</taxon>
        <taxon>Eutheria</taxon>
        <taxon>Laurasiatheria</taxon>
        <taxon>Artiodactyla</taxon>
        <taxon>Suina</taxon>
        <taxon>Suidae</taxon>
        <taxon>Sus</taxon>
    </lineage>
</organism>
<proteinExistence type="evidence at protein level"/>
<feature type="chain" id="PRO_0000215503" description="Large ribosomal subunit protein eL22">
    <location>
        <begin position="1"/>
        <end position="128"/>
    </location>
</feature>
<feature type="modified residue" description="Phosphothreonine" evidence="2">
    <location>
        <position position="62"/>
    </location>
</feature>
<feature type="modified residue" description="Phosphoserine" evidence="1">
    <location>
        <position position="66"/>
    </location>
</feature>
<feature type="modified residue" description="N6-succinyllysine" evidence="2">
    <location>
        <position position="69"/>
    </location>
</feature>
<comment type="function">
    <text evidence="1">Component of the large ribosomal subunit. The ribosome is a large ribonucleoprotein complex responsible for the synthesis of proteins in the cell.</text>
</comment>
<comment type="subunit">
    <text evidence="1">Component of the large ribosomal subunit.</text>
</comment>
<comment type="subcellular location">
    <subcellularLocation>
        <location evidence="1">Cytoplasm</location>
    </subcellularLocation>
</comment>
<comment type="similarity">
    <text evidence="3">Belongs to the eukaryotic ribosomal protein eL22 family.</text>
</comment>
<gene>
    <name type="primary">RPL22</name>
</gene>
<evidence type="ECO:0000250" key="1">
    <source>
        <dbReference type="UniProtKB" id="P35268"/>
    </source>
</evidence>
<evidence type="ECO:0000250" key="2">
    <source>
        <dbReference type="UniProtKB" id="P67984"/>
    </source>
</evidence>
<evidence type="ECO:0000305" key="3"/>
<keyword id="KW-0002">3D-structure</keyword>
<keyword id="KW-0963">Cytoplasm</keyword>
<keyword id="KW-0358">Heparin-binding</keyword>
<keyword id="KW-0597">Phosphoprotein</keyword>
<keyword id="KW-1185">Reference proteome</keyword>
<keyword id="KW-0687">Ribonucleoprotein</keyword>
<keyword id="KW-0689">Ribosomal protein</keyword>
<keyword id="KW-0694">RNA-binding</keyword>
<dbReference type="EMBL" id="D17654">
    <property type="protein sequence ID" value="BAA04547.1"/>
    <property type="molecule type" value="mRNA"/>
</dbReference>
<dbReference type="PIR" id="JC2121">
    <property type="entry name" value="JC2121"/>
</dbReference>
<dbReference type="RefSeq" id="NP_999152.1">
    <property type="nucleotide sequence ID" value="NM_213987.1"/>
</dbReference>
<dbReference type="PDB" id="3J7O">
    <property type="method" value="EM"/>
    <property type="resolution" value="3.40 A"/>
    <property type="chains" value="U=1-128"/>
</dbReference>
<dbReference type="PDB" id="3J7P">
    <property type="method" value="EM"/>
    <property type="resolution" value="3.50 A"/>
    <property type="chains" value="U=1-128"/>
</dbReference>
<dbReference type="PDB" id="3J7Q">
    <property type="method" value="EM"/>
    <property type="resolution" value="3.40 A"/>
    <property type="chains" value="U=1-128"/>
</dbReference>
<dbReference type="PDB" id="3J7R">
    <property type="method" value="EM"/>
    <property type="resolution" value="3.90 A"/>
    <property type="chains" value="U=1-128"/>
</dbReference>
<dbReference type="PDBsum" id="3J7O"/>
<dbReference type="PDBsum" id="3J7P"/>
<dbReference type="PDBsum" id="3J7Q"/>
<dbReference type="PDBsum" id="3J7R"/>
<dbReference type="SMR" id="P67985"/>
<dbReference type="FunCoup" id="P67985">
    <property type="interactions" value="1815"/>
</dbReference>
<dbReference type="STRING" id="9823.ENSSSCP00000040843"/>
<dbReference type="PaxDb" id="9823-ENSSSCP00000003651"/>
<dbReference type="PeptideAtlas" id="P67985"/>
<dbReference type="Ensembl" id="ENSSSCT00000049730.3">
    <property type="protein sequence ID" value="ENSSSCP00000042758.1"/>
    <property type="gene ID" value="ENSSSCG00000054047.1"/>
</dbReference>
<dbReference type="Ensembl" id="ENSSSCT00025049467.1">
    <property type="protein sequence ID" value="ENSSSCP00025021170.1"/>
    <property type="gene ID" value="ENSSSCG00025036285.1"/>
</dbReference>
<dbReference type="Ensembl" id="ENSSSCT00035005003.1">
    <property type="protein sequence ID" value="ENSSSCP00035001709.1"/>
    <property type="gene ID" value="ENSSSCG00035004022.1"/>
</dbReference>
<dbReference type="Ensembl" id="ENSSSCT00050084550.1">
    <property type="protein sequence ID" value="ENSSSCP00050036299.1"/>
    <property type="gene ID" value="ENSSSCG00050062054.1"/>
</dbReference>
<dbReference type="Ensembl" id="ENSSSCT00055007866.1">
    <property type="protein sequence ID" value="ENSSSCP00055006220.1"/>
    <property type="gene ID" value="ENSSSCG00055004004.1"/>
</dbReference>
<dbReference type="Ensembl" id="ENSSSCT00060060042.1">
    <property type="protein sequence ID" value="ENSSSCP00060025739.1"/>
    <property type="gene ID" value="ENSSSCG00060044262.1"/>
</dbReference>
<dbReference type="Ensembl" id="ENSSSCT00070059435.1">
    <property type="protein sequence ID" value="ENSSSCP00070050614.1"/>
    <property type="gene ID" value="ENSSSCG00070029571.1"/>
</dbReference>
<dbReference type="Ensembl" id="ENSSSCT00105043435">
    <property type="protein sequence ID" value="ENSSSCP00105030288"/>
    <property type="gene ID" value="ENSSSCG00105022788"/>
</dbReference>
<dbReference type="Ensembl" id="ENSSSCT00110035860">
    <property type="protein sequence ID" value="ENSSSCP00110024479"/>
    <property type="gene ID" value="ENSSSCG00110018749"/>
</dbReference>
<dbReference type="Ensembl" id="ENSSSCT00115028729">
    <property type="protein sequence ID" value="ENSSSCP00115027256"/>
    <property type="gene ID" value="ENSSSCG00115016402"/>
</dbReference>
<dbReference type="Ensembl" id="ENSSSCT00130033418">
    <property type="protein sequence ID" value="ENSSSCP00130023058"/>
    <property type="gene ID" value="ENSSSCG00130017011"/>
</dbReference>
<dbReference type="GeneID" id="397047"/>
<dbReference type="KEGG" id="ssc:397047"/>
<dbReference type="CTD" id="6146"/>
<dbReference type="eggNOG" id="KOG3434">
    <property type="taxonomic scope" value="Eukaryota"/>
</dbReference>
<dbReference type="GeneTree" id="ENSGT00940000153314"/>
<dbReference type="HOGENOM" id="CLU_105624_0_1_1"/>
<dbReference type="InParanoid" id="P67985"/>
<dbReference type="OMA" id="IMEIGSF"/>
<dbReference type="OrthoDB" id="10259820at2759"/>
<dbReference type="TreeFam" id="TF313018"/>
<dbReference type="Reactome" id="R-SSC-156827">
    <property type="pathway name" value="L13a-mediated translational silencing of Ceruloplasmin expression"/>
</dbReference>
<dbReference type="Reactome" id="R-SSC-1799339">
    <property type="pathway name" value="SRP-dependent cotranslational protein targeting to membrane"/>
</dbReference>
<dbReference type="Reactome" id="R-SSC-6791226">
    <property type="pathway name" value="Major pathway of rRNA processing in the nucleolus and cytosol"/>
</dbReference>
<dbReference type="Reactome" id="R-SSC-72689">
    <property type="pathway name" value="Formation of a pool of free 40S subunits"/>
</dbReference>
<dbReference type="Reactome" id="R-SSC-72706">
    <property type="pathway name" value="GTP hydrolysis and joining of the 60S ribosomal subunit"/>
</dbReference>
<dbReference type="Reactome" id="R-SSC-975956">
    <property type="pathway name" value="Nonsense Mediated Decay (NMD) independent of the Exon Junction Complex (EJC)"/>
</dbReference>
<dbReference type="Reactome" id="R-SSC-975957">
    <property type="pathway name" value="Nonsense Mediated Decay (NMD) enhanced by the Exon Junction Complex (EJC)"/>
</dbReference>
<dbReference type="Proteomes" id="UP000008227">
    <property type="component" value="Chromosome 6"/>
</dbReference>
<dbReference type="Proteomes" id="UP000314985">
    <property type="component" value="Chromosome 6"/>
</dbReference>
<dbReference type="Proteomes" id="UP000694570">
    <property type="component" value="Unplaced"/>
</dbReference>
<dbReference type="Proteomes" id="UP000694571">
    <property type="component" value="Unplaced"/>
</dbReference>
<dbReference type="Proteomes" id="UP000694720">
    <property type="component" value="Unplaced"/>
</dbReference>
<dbReference type="Proteomes" id="UP000694722">
    <property type="component" value="Unplaced"/>
</dbReference>
<dbReference type="Proteomes" id="UP000694723">
    <property type="component" value="Unplaced"/>
</dbReference>
<dbReference type="Proteomes" id="UP000694724">
    <property type="component" value="Unplaced"/>
</dbReference>
<dbReference type="Proteomes" id="UP000694725">
    <property type="component" value="Unplaced"/>
</dbReference>
<dbReference type="Proteomes" id="UP000694726">
    <property type="component" value="Unplaced"/>
</dbReference>
<dbReference type="Proteomes" id="UP000694727">
    <property type="component" value="Unplaced"/>
</dbReference>
<dbReference type="Proteomes" id="UP000694728">
    <property type="component" value="Unplaced"/>
</dbReference>
<dbReference type="Bgee" id="ENSSSCG00000003369">
    <property type="expression patterns" value="Expressed in hindlimb bud and 45 other cell types or tissues"/>
</dbReference>
<dbReference type="ExpressionAtlas" id="P67985">
    <property type="expression patterns" value="baseline and differential"/>
</dbReference>
<dbReference type="GO" id="GO:0098556">
    <property type="term" value="C:cytoplasmic side of rough endoplasmic reticulum membrane"/>
    <property type="evidence" value="ECO:0000314"/>
    <property type="project" value="UniProtKB"/>
</dbReference>
<dbReference type="GO" id="GO:0022625">
    <property type="term" value="C:cytosolic large ribosomal subunit"/>
    <property type="evidence" value="ECO:0007669"/>
    <property type="project" value="Ensembl"/>
</dbReference>
<dbReference type="GO" id="GO:0098978">
    <property type="term" value="C:glutamatergic synapse"/>
    <property type="evidence" value="ECO:0007669"/>
    <property type="project" value="Ensembl"/>
</dbReference>
<dbReference type="GO" id="GO:0015934">
    <property type="term" value="C:large ribosomal subunit"/>
    <property type="evidence" value="ECO:0000314"/>
    <property type="project" value="UniProtKB"/>
</dbReference>
<dbReference type="GO" id="GO:0098793">
    <property type="term" value="C:presynapse"/>
    <property type="evidence" value="ECO:0007669"/>
    <property type="project" value="Ensembl"/>
</dbReference>
<dbReference type="GO" id="GO:0008201">
    <property type="term" value="F:heparin binding"/>
    <property type="evidence" value="ECO:0007669"/>
    <property type="project" value="UniProtKB-KW"/>
</dbReference>
<dbReference type="GO" id="GO:0003723">
    <property type="term" value="F:RNA binding"/>
    <property type="evidence" value="ECO:0000318"/>
    <property type="project" value="GO_Central"/>
</dbReference>
<dbReference type="GO" id="GO:0003735">
    <property type="term" value="F:structural constituent of ribosome"/>
    <property type="evidence" value="ECO:0000318"/>
    <property type="project" value="GO_Central"/>
</dbReference>
<dbReference type="GO" id="GO:0046632">
    <property type="term" value="P:alpha-beta T cell differentiation"/>
    <property type="evidence" value="ECO:0007669"/>
    <property type="project" value="Ensembl"/>
</dbReference>
<dbReference type="GO" id="GO:0002181">
    <property type="term" value="P:cytoplasmic translation"/>
    <property type="evidence" value="ECO:0000318"/>
    <property type="project" value="GO_Central"/>
</dbReference>
<dbReference type="GO" id="GO:0140236">
    <property type="term" value="P:translation at presynapse"/>
    <property type="evidence" value="ECO:0007669"/>
    <property type="project" value="Ensembl"/>
</dbReference>
<dbReference type="FunFam" id="3.30.1360.210:FF:000001">
    <property type="entry name" value="60S ribosomal protein L22 1"/>
    <property type="match status" value="1"/>
</dbReference>
<dbReference type="Gene3D" id="3.30.1360.210">
    <property type="match status" value="1"/>
</dbReference>
<dbReference type="InterPro" id="IPR002671">
    <property type="entry name" value="Ribosomal_eL22"/>
</dbReference>
<dbReference type="InterPro" id="IPR038526">
    <property type="entry name" value="Ribosomal_eL22_sf"/>
</dbReference>
<dbReference type="PANTHER" id="PTHR10064">
    <property type="entry name" value="60S RIBOSOMAL PROTEIN L22"/>
    <property type="match status" value="1"/>
</dbReference>
<dbReference type="PANTHER" id="PTHR10064:SF2">
    <property type="entry name" value="LARGE RIBOSOMAL SUBUNIT PROTEIN EL22"/>
    <property type="match status" value="1"/>
</dbReference>
<dbReference type="Pfam" id="PF01776">
    <property type="entry name" value="Ribosomal_L22e"/>
    <property type="match status" value="1"/>
</dbReference>
<accession>P67985</accession>
<accession>P41104</accession>
<name>RL22_PIG</name>
<reference key="1">
    <citation type="journal article" date="1994" name="Biochem. Biophys. Res. Commun.">
        <title>A novel heparin-binding protein, HBp15, is identified as mammalian ribosomal protein L22.</title>
        <authorList>
            <person name="Fujita Y."/>
            <person name="Okamoto T."/>
            <person name="Noshiro M."/>
            <person name="Kato Y."/>
            <person name="Takada K."/>
            <person name="Sato J.D."/>
            <person name="Ozaki T."/>
            <person name="McKeehan W.L."/>
            <person name="Crabb J.W."/>
            <person name="Whitney R.G."/>
        </authorList>
    </citation>
    <scope>NUCLEOTIDE SEQUENCE [MRNA]</scope>
    <source>
        <tissue>Submandibular gland</tissue>
    </source>
</reference>